<protein>
    <recommendedName>
        <fullName evidence="1">NAD(P)H-quinone oxidoreductase chain 4, chloroplastic</fullName>
        <ecNumber evidence="1">7.1.1.-</ecNumber>
    </recommendedName>
    <alternativeName>
        <fullName evidence="1">NAD(P)H dehydrogenase, chain 4</fullName>
    </alternativeName>
    <alternativeName>
        <fullName evidence="1">NADH-plastoquinone oxidoreductase chain 4</fullName>
    </alternativeName>
</protein>
<proteinExistence type="inferred from homology"/>
<comment type="catalytic activity">
    <reaction evidence="1">
        <text>a plastoquinone + NADH + (n+1) H(+)(in) = a plastoquinol + NAD(+) + n H(+)(out)</text>
        <dbReference type="Rhea" id="RHEA:42608"/>
        <dbReference type="Rhea" id="RHEA-COMP:9561"/>
        <dbReference type="Rhea" id="RHEA-COMP:9562"/>
        <dbReference type="ChEBI" id="CHEBI:15378"/>
        <dbReference type="ChEBI" id="CHEBI:17757"/>
        <dbReference type="ChEBI" id="CHEBI:57540"/>
        <dbReference type="ChEBI" id="CHEBI:57945"/>
        <dbReference type="ChEBI" id="CHEBI:62192"/>
    </reaction>
</comment>
<comment type="catalytic activity">
    <reaction evidence="1">
        <text>a plastoquinone + NADPH + (n+1) H(+)(in) = a plastoquinol + NADP(+) + n H(+)(out)</text>
        <dbReference type="Rhea" id="RHEA:42612"/>
        <dbReference type="Rhea" id="RHEA-COMP:9561"/>
        <dbReference type="Rhea" id="RHEA-COMP:9562"/>
        <dbReference type="ChEBI" id="CHEBI:15378"/>
        <dbReference type="ChEBI" id="CHEBI:17757"/>
        <dbReference type="ChEBI" id="CHEBI:57783"/>
        <dbReference type="ChEBI" id="CHEBI:58349"/>
        <dbReference type="ChEBI" id="CHEBI:62192"/>
    </reaction>
</comment>
<comment type="subcellular location">
    <subcellularLocation>
        <location evidence="1">Plastid</location>
        <location evidence="1">Chloroplast thylakoid membrane</location>
        <topology evidence="1">Multi-pass membrane protein</topology>
    </subcellularLocation>
</comment>
<comment type="similarity">
    <text evidence="1">Belongs to the complex I subunit 4 family.</text>
</comment>
<sequence length="500" mass="56535">MSSFPWLTILVVLPIFAGSLIFFLPHRGNKIVRWYTMSICLLEFLLMTYAFCYHFQLEDPLIQLKEDSKWIDVFNFHWRLGIDGLSLGSILLTGFMTTLATLAAWPVTRNSRLFYFLMLAMYSGQIGLFSSRDLLLFFIMWELELIPVYLLLSMWGGKRRLYSATKFILYTAGGSIFFLIGVLGMGLYGSNEPRLDLERLINQSYPATLEILFYFGFLIAYAVKLPIIPLHTWLPDTHGEAHYSTCMLLAGILLKMGAYGLIRINMELLPHAHYLFSPWLVIIGAMQIIYAASTSLGQRNFKKRIAYSSVSHMGFIIIGIGSITNIGLNGAILQILSHGFIGATLFFLAGTACDRMRLVYLEELGGVSIPMPKIFTMFSSFSMASLALPGMSGFVAELVVFFGLITSPKFLLMPKMLITFVMAIGMILTPIYLLSMLRQMFYGYKLFHVPNENFEDSGPRELFLLICIFLPVIGIGIYPDFVLSLSVDRVEALLSNYYPK</sequence>
<geneLocation type="chloroplast"/>
<organism>
    <name type="scientific">Oryza nivara</name>
    <name type="common">Indian wild rice</name>
    <name type="synonym">Oryza sativa f. spontanea</name>
    <dbReference type="NCBI Taxonomy" id="4536"/>
    <lineage>
        <taxon>Eukaryota</taxon>
        <taxon>Viridiplantae</taxon>
        <taxon>Streptophyta</taxon>
        <taxon>Embryophyta</taxon>
        <taxon>Tracheophyta</taxon>
        <taxon>Spermatophyta</taxon>
        <taxon>Magnoliopsida</taxon>
        <taxon>Liliopsida</taxon>
        <taxon>Poales</taxon>
        <taxon>Poaceae</taxon>
        <taxon>BOP clade</taxon>
        <taxon>Oryzoideae</taxon>
        <taxon>Oryzeae</taxon>
        <taxon>Oryzinae</taxon>
        <taxon>Oryza</taxon>
    </lineage>
</organism>
<evidence type="ECO:0000255" key="1">
    <source>
        <dbReference type="HAMAP-Rule" id="MF_00491"/>
    </source>
</evidence>
<evidence type="ECO:0000312" key="2">
    <source>
        <dbReference type="Proteomes" id="UP000006591"/>
    </source>
</evidence>
<gene>
    <name evidence="1" type="primary">ndhD</name>
</gene>
<accession>Q6ENA7</accession>
<name>NU4C_ORYNI</name>
<dbReference type="EC" id="7.1.1.-" evidence="1"/>
<dbReference type="EMBL" id="AP006728">
    <property type="protein sequence ID" value="BAD26845.1"/>
    <property type="molecule type" value="Genomic_DNA"/>
</dbReference>
<dbReference type="RefSeq" id="YP_052815.1">
    <property type="nucleotide sequence ID" value="NC_005973.1"/>
</dbReference>
<dbReference type="SMR" id="Q6ENA7"/>
<dbReference type="STRING" id="4536.Q6ENA7"/>
<dbReference type="GeneID" id="2885902"/>
<dbReference type="Proteomes" id="UP000006591">
    <property type="component" value="Chloroplast"/>
</dbReference>
<dbReference type="GO" id="GO:0009535">
    <property type="term" value="C:chloroplast thylakoid membrane"/>
    <property type="evidence" value="ECO:0007669"/>
    <property type="project" value="UniProtKB-SubCell"/>
</dbReference>
<dbReference type="GO" id="GO:0009536">
    <property type="term" value="C:plastid"/>
    <property type="evidence" value="ECO:0000305"/>
    <property type="project" value="Gramene"/>
</dbReference>
<dbReference type="GO" id="GO:0008137">
    <property type="term" value="F:NADH dehydrogenase (ubiquinone) activity"/>
    <property type="evidence" value="ECO:0007669"/>
    <property type="project" value="InterPro"/>
</dbReference>
<dbReference type="GO" id="GO:0048039">
    <property type="term" value="F:ubiquinone binding"/>
    <property type="evidence" value="ECO:0007669"/>
    <property type="project" value="TreeGrafter"/>
</dbReference>
<dbReference type="GO" id="GO:0042773">
    <property type="term" value="P:ATP synthesis coupled electron transport"/>
    <property type="evidence" value="ECO:0007669"/>
    <property type="project" value="InterPro"/>
</dbReference>
<dbReference type="GO" id="GO:0015990">
    <property type="term" value="P:electron transport coupled proton transport"/>
    <property type="evidence" value="ECO:0007669"/>
    <property type="project" value="TreeGrafter"/>
</dbReference>
<dbReference type="HAMAP" id="MF_00491">
    <property type="entry name" value="NDH1_NuoM"/>
    <property type="match status" value="1"/>
</dbReference>
<dbReference type="InterPro" id="IPR022997">
    <property type="entry name" value="NADH_Q_OxRdtase_chain4"/>
</dbReference>
<dbReference type="InterPro" id="IPR010227">
    <property type="entry name" value="NADH_Q_OxRdtase_chainM/4"/>
</dbReference>
<dbReference type="InterPro" id="IPR003918">
    <property type="entry name" value="NADH_UbQ_OxRdtase"/>
</dbReference>
<dbReference type="InterPro" id="IPR001750">
    <property type="entry name" value="ND/Mrp_TM"/>
</dbReference>
<dbReference type="NCBIfam" id="TIGR01972">
    <property type="entry name" value="NDH_I_M"/>
    <property type="match status" value="1"/>
</dbReference>
<dbReference type="PANTHER" id="PTHR43507:SF21">
    <property type="entry name" value="NAD(P)H-QUINONE OXIDOREDUCTASE CHAIN 4, CHLOROPLASTIC"/>
    <property type="match status" value="1"/>
</dbReference>
<dbReference type="PANTHER" id="PTHR43507">
    <property type="entry name" value="NADH-UBIQUINONE OXIDOREDUCTASE CHAIN 4"/>
    <property type="match status" value="1"/>
</dbReference>
<dbReference type="Pfam" id="PF00361">
    <property type="entry name" value="Proton_antipo_M"/>
    <property type="match status" value="1"/>
</dbReference>
<dbReference type="PRINTS" id="PR01437">
    <property type="entry name" value="NUOXDRDTASE4"/>
</dbReference>
<reference key="1">
    <citation type="journal article" date="2004" name="Gene">
        <title>The complete nucleotide sequence of wild rice (Oryza nivara) chloroplast genome: first genome wide comparative sequence analysis of wild and cultivated rice.</title>
        <authorList>
            <person name="Masood M.S."/>
            <person name="Nishikawa T."/>
            <person name="Fukuoka S."/>
            <person name="Njenga P.K."/>
            <person name="Tsudzuki T."/>
            <person name="Kadowaki K."/>
        </authorList>
    </citation>
    <scope>NUCLEOTIDE SEQUENCE [LARGE SCALE GENOMIC DNA]</scope>
    <source>
        <strain evidence="2">cv. SL10</strain>
    </source>
</reference>
<feature type="chain" id="PRO_0000118023" description="NAD(P)H-quinone oxidoreductase chain 4, chloroplastic">
    <location>
        <begin position="1"/>
        <end position="500"/>
    </location>
</feature>
<feature type="transmembrane region" description="Helical" evidence="1">
    <location>
        <begin position="4"/>
        <end position="24"/>
    </location>
</feature>
<feature type="transmembrane region" description="Helical" evidence="1">
    <location>
        <begin position="37"/>
        <end position="57"/>
    </location>
</feature>
<feature type="transmembrane region" description="Helical" evidence="1">
    <location>
        <begin position="87"/>
        <end position="107"/>
    </location>
</feature>
<feature type="transmembrane region" description="Helical" evidence="1">
    <location>
        <begin position="113"/>
        <end position="130"/>
    </location>
</feature>
<feature type="transmembrane region" description="Helical" evidence="1">
    <location>
        <begin position="134"/>
        <end position="154"/>
    </location>
</feature>
<feature type="transmembrane region" description="Helical" evidence="1">
    <location>
        <begin position="167"/>
        <end position="187"/>
    </location>
</feature>
<feature type="transmembrane region" description="Helical" evidence="1">
    <location>
        <begin position="211"/>
        <end position="231"/>
    </location>
</feature>
<feature type="transmembrane region" description="Helical" evidence="1">
    <location>
        <begin position="242"/>
        <end position="262"/>
    </location>
</feature>
<feature type="transmembrane region" description="Helical" evidence="1">
    <location>
        <begin position="272"/>
        <end position="292"/>
    </location>
</feature>
<feature type="transmembrane region" description="Helical" evidence="1">
    <location>
        <begin position="313"/>
        <end position="333"/>
    </location>
</feature>
<feature type="transmembrane region" description="Helical" evidence="1">
    <location>
        <begin position="334"/>
        <end position="354"/>
    </location>
</feature>
<feature type="transmembrane region" description="Helical" evidence="1">
    <location>
        <begin position="386"/>
        <end position="406"/>
    </location>
</feature>
<feature type="transmembrane region" description="Helical" evidence="1">
    <location>
        <begin position="417"/>
        <end position="437"/>
    </location>
</feature>
<feature type="transmembrane region" description="Helical" evidence="1">
    <location>
        <begin position="462"/>
        <end position="482"/>
    </location>
</feature>
<keyword id="KW-0150">Chloroplast</keyword>
<keyword id="KW-0472">Membrane</keyword>
<keyword id="KW-0520">NAD</keyword>
<keyword id="KW-0521">NADP</keyword>
<keyword id="KW-0934">Plastid</keyword>
<keyword id="KW-0618">Plastoquinone</keyword>
<keyword id="KW-0874">Quinone</keyword>
<keyword id="KW-1185">Reference proteome</keyword>
<keyword id="KW-0793">Thylakoid</keyword>
<keyword id="KW-1278">Translocase</keyword>
<keyword id="KW-0812">Transmembrane</keyword>
<keyword id="KW-1133">Transmembrane helix</keyword>